<reference key="1">
    <citation type="journal article" date="1986" name="J. Gen. Virol.">
        <title>The complete DNA sequence of varicella-zoster virus.</title>
        <authorList>
            <person name="Davison A.J."/>
            <person name="Scott J.E."/>
        </authorList>
    </citation>
    <scope>NUCLEOTIDE SEQUENCE [LARGE SCALE GENOMIC DNA]</scope>
</reference>
<evidence type="ECO:0000255" key="1">
    <source>
        <dbReference type="HAMAP-Rule" id="MF_04024"/>
    </source>
</evidence>
<feature type="chain" id="PRO_0000116031" description="Nuclear egress protein 2">
    <location>
        <begin position="1"/>
        <end position="269"/>
    </location>
</feature>
<feature type="topological domain" description="Perinuclear space" evidence="1">
    <location>
        <begin position="1"/>
        <end position="247"/>
    </location>
</feature>
<feature type="transmembrane region" description="Helical" evidence="1">
    <location>
        <begin position="248"/>
        <end position="268"/>
    </location>
</feature>
<feature type="topological domain" description="Nuclear" evidence="1">
    <location>
        <position position="269"/>
    </location>
</feature>
<sequence length="269" mass="30452">MSRRTYVRSERRRGCGDNLLQRIRLVVPSALQCCDGDLPIFDPQRPPARCVFQFNGEDNVSEAFPVEYIMRLMANWAQVDCDPYIKIQNTGVSVLFQGFFFRPTNAPVAEVSIDSNNVILSSTLSTGINLSALESIKRGGGIDRRPLQALMWVNCFVRMPYVQLSFRFMGPEDPSRTIKLMARATDAYMYKETGNNLDEYIRWRPSFRSPPENGSPNTSVQMQSDIKPALPDTQTTRVWKLALPVANVTYALFIVIVLVVVLGAVLFWK</sequence>
<proteinExistence type="inferred from homology"/>
<organismHost>
    <name type="scientific">Homo sapiens</name>
    <name type="common">Human</name>
    <dbReference type="NCBI Taxonomy" id="9606"/>
</organismHost>
<dbReference type="EMBL" id="X04370">
    <property type="protein sequence ID" value="CAA27907.1"/>
    <property type="molecule type" value="Genomic_DNA"/>
</dbReference>
<dbReference type="PIR" id="F27343">
    <property type="entry name" value="WZBE24"/>
</dbReference>
<dbReference type="SMR" id="P09280"/>
<dbReference type="Proteomes" id="UP000002602">
    <property type="component" value="Genome"/>
</dbReference>
<dbReference type="GO" id="GO:0044201">
    <property type="term" value="C:host cell nuclear inner membrane"/>
    <property type="evidence" value="ECO:0007669"/>
    <property type="project" value="UniProtKB-SubCell"/>
</dbReference>
<dbReference type="GO" id="GO:0016020">
    <property type="term" value="C:membrane"/>
    <property type="evidence" value="ECO:0007669"/>
    <property type="project" value="UniProtKB-KW"/>
</dbReference>
<dbReference type="HAMAP" id="MF_04024">
    <property type="entry name" value="HSV_NEC2"/>
    <property type="match status" value="1"/>
</dbReference>
<dbReference type="InterPro" id="IPR007626">
    <property type="entry name" value="Herpesvirus_viron_egress-type"/>
</dbReference>
<dbReference type="Pfam" id="PF04541">
    <property type="entry name" value="Herpes_U34"/>
    <property type="match status" value="1"/>
</dbReference>
<gene>
    <name evidence="1" type="primary">NEC2</name>
    <name type="ordered locus">24</name>
</gene>
<keyword id="KW-1043">Host membrane</keyword>
<keyword id="KW-1048">Host nucleus</keyword>
<keyword id="KW-0426">Late protein</keyword>
<keyword id="KW-0472">Membrane</keyword>
<keyword id="KW-0597">Phosphoprotein</keyword>
<keyword id="KW-1185">Reference proteome</keyword>
<keyword id="KW-0812">Transmembrane</keyword>
<keyword id="KW-1133">Transmembrane helix</keyword>
<comment type="function">
    <text evidence="1">Plays an essential role in virion nuclear egress, the first step of virion release from infected cell. Within the host nucleus, NEC1 interacts with the newly formed capsid through the vertexes and directs it to the inner nuclear membrane by associating with NEC2. Induces the budding of the capsid at the inner nuclear membrane as well as its envelopment into the perinuclear space. There, the NEC1/NEC2 complex promotes the fusion of the enveloped capsid with the outer nuclear membrane and the subsequent release of the viral capsid into the cytoplasm where it will reach the secondary budding sites in the host Golgi or trans-Golgi network.</text>
</comment>
<comment type="subunit">
    <text evidence="1">Forms a heterohexameric complex with NEC1.</text>
</comment>
<comment type="subcellular location">
    <subcellularLocation>
        <location evidence="1">Host nucleus inner membrane</location>
        <topology evidence="1">Single-pass membrane protein</topology>
    </subcellularLocation>
    <text evidence="1">Also localizes at the transient membrane of perinuclear virions.</text>
</comment>
<comment type="PTM">
    <text evidence="1">Phosphorylated.</text>
</comment>
<comment type="similarity">
    <text evidence="1">Belongs to the herpesviridae NEC2 protein family.</text>
</comment>
<organism>
    <name type="scientific">Varicella-zoster virus (strain Dumas)</name>
    <name type="common">HHV-3</name>
    <name type="synonym">Human herpesvirus 3</name>
    <dbReference type="NCBI Taxonomy" id="10338"/>
    <lineage>
        <taxon>Viruses</taxon>
        <taxon>Duplodnaviria</taxon>
        <taxon>Heunggongvirae</taxon>
        <taxon>Peploviricota</taxon>
        <taxon>Herviviricetes</taxon>
        <taxon>Herpesvirales</taxon>
        <taxon>Orthoherpesviridae</taxon>
        <taxon>Alphaherpesvirinae</taxon>
        <taxon>Varicellovirus</taxon>
        <taxon>Varicellovirus humanalpha3</taxon>
        <taxon>Human herpesvirus 3</taxon>
    </lineage>
</organism>
<accession>P09280</accession>
<protein>
    <recommendedName>
        <fullName evidence="1">Nuclear egress protein 2</fullName>
    </recommendedName>
</protein>
<name>NEC2_VZVD</name>